<gene>
    <name type="primary">oct1</name>
    <name type="ORF">BC1G_12067</name>
    <name type="ORF">BCIN_11g05560</name>
</gene>
<organism>
    <name type="scientific">Botryotinia fuckeliana (strain B05.10)</name>
    <name type="common">Noble rot fungus</name>
    <name type="synonym">Botrytis cinerea</name>
    <dbReference type="NCBI Taxonomy" id="332648"/>
    <lineage>
        <taxon>Eukaryota</taxon>
        <taxon>Fungi</taxon>
        <taxon>Dikarya</taxon>
        <taxon>Ascomycota</taxon>
        <taxon>Pezizomycotina</taxon>
        <taxon>Leotiomycetes</taxon>
        <taxon>Helotiales</taxon>
        <taxon>Sclerotiniaceae</taxon>
        <taxon>Botrytis</taxon>
    </lineage>
</organism>
<keyword id="KW-0378">Hydrolase</keyword>
<keyword id="KW-0479">Metal-binding</keyword>
<keyword id="KW-0482">Metalloprotease</keyword>
<keyword id="KW-0496">Mitochondrion</keyword>
<keyword id="KW-0645">Protease</keyword>
<keyword id="KW-1185">Reference proteome</keyword>
<keyword id="KW-0809">Transit peptide</keyword>
<keyword id="KW-0862">Zinc</keyword>
<accession>A6SHZ5</accession>
<accession>A0A384JXE8</accession>
<sequence>MLKVTTSRPWVCSRCVRRQVQSRRRLATASTQYRESRPVPVDNSAPGAKRDDRTLRQIFDSPNFWAEFSQSSKQSYNRPAVGLFQNRYLVNPQGFEVFANTSLRKAQRIVDKVLSASTVEEYRHVARELDRLSDLLCRVIDLSDFVRATHPNAAIQAAASRAYAKMFEYMNILNTTTGLDKQLEIAMATPEIVAGWTEEEVVVADILRKDFAKSAIDLPRAQRERFVALSQEISEIGPEFVDYMTPAKPYLTFESSKLKGMDPVLVRQYTTWGQTKIPTIGGAAAAAIRSVQNEDVRKEIFMATRTASRNTVYKLEELMRKRAELAKLSRYESYSHLALGDKMAKSPASVSQFLEALSKDNNQIVEGEVSELLKFKMSNSHGSSPGLQPWDKDYYMSQILASVRSHSRNSDFLSAYFSLGTVMQGLSRLFTRLYGVRLAPHETMPGETWNSDVRRLDVISETDGHVAVLYCDLFSRPGKSPNPAHFTLRCSREITTPELEEASSLSQNGLFKTNEEAANDGMATSRASGVLKQLPTIALICDFVTMSGKSSRPALLSFNEVQTLFHEMGHAIHSILGRTSLQNVSGTRCATDFAELPSVLMEHFAADPSVLSLFARHYETDQPLPYEMVAEKLALDKRFEGSDTENQIILSMLDLAYHSDLPLSPSFSSTQIYHSLQQKHGALPVDPPGTCWQGFFGHLFGYGSTYYSYLFDRVLARRIWQVVFKDGEAGGSIQRDNGEKMKEEVLKWGGGRDPWKCLAGVLDDGRVENGDEKAMAIVGSWGVKE</sequence>
<protein>
    <recommendedName>
        <fullName>Mitochondrial intermediate peptidase</fullName>
        <shortName>MIP</shortName>
        <ecNumber>3.4.24.59</ecNumber>
    </recommendedName>
    <alternativeName>
        <fullName>Octapeptidyl aminopeptidase</fullName>
    </alternativeName>
</protein>
<name>PMIP_BOTFB</name>
<feature type="transit peptide" description="Mitochondrion" evidence="2">
    <location>
        <begin position="1"/>
        <end position="26"/>
    </location>
</feature>
<feature type="chain" id="PRO_0000338575" description="Mitochondrial intermediate peptidase" evidence="2">
    <location>
        <begin position="27"/>
        <end position="785"/>
    </location>
</feature>
<feature type="region of interest" description="Disordered" evidence="4">
    <location>
        <begin position="26"/>
        <end position="51"/>
    </location>
</feature>
<feature type="active site" evidence="3">
    <location>
        <position position="567"/>
    </location>
</feature>
<feature type="binding site" evidence="3">
    <location>
        <position position="566"/>
    </location>
    <ligand>
        <name>Zn(2+)</name>
        <dbReference type="ChEBI" id="CHEBI:29105"/>
        <note>catalytic</note>
    </ligand>
</feature>
<feature type="binding site" evidence="3">
    <location>
        <position position="570"/>
    </location>
    <ligand>
        <name>Zn(2+)</name>
        <dbReference type="ChEBI" id="CHEBI:29105"/>
        <note>catalytic</note>
    </ligand>
</feature>
<feature type="binding site" evidence="3">
    <location>
        <position position="573"/>
    </location>
    <ligand>
        <name>Zn(2+)</name>
        <dbReference type="ChEBI" id="CHEBI:29105"/>
        <note>catalytic</note>
    </ligand>
</feature>
<evidence type="ECO:0000250" key="1"/>
<evidence type="ECO:0000255" key="2"/>
<evidence type="ECO:0000255" key="3">
    <source>
        <dbReference type="PROSITE-ProRule" id="PRU10095"/>
    </source>
</evidence>
<evidence type="ECO:0000256" key="4">
    <source>
        <dbReference type="SAM" id="MobiDB-lite"/>
    </source>
</evidence>
<evidence type="ECO:0000305" key="5"/>
<dbReference type="EC" id="3.4.24.59"/>
<dbReference type="EMBL" id="CP009815">
    <property type="protein sequence ID" value="ATZ55286.1"/>
    <property type="molecule type" value="Genomic_DNA"/>
</dbReference>
<dbReference type="RefSeq" id="XP_001549090.1">
    <property type="nucleotide sequence ID" value="XM_001549040.1"/>
</dbReference>
<dbReference type="SMR" id="A6SHZ5"/>
<dbReference type="EnsemblFungi" id="Bcin11g05560.1">
    <property type="protein sequence ID" value="Bcin11p05560.1"/>
    <property type="gene ID" value="Bcin11g05560"/>
</dbReference>
<dbReference type="GeneID" id="5429605"/>
<dbReference type="KEGG" id="bfu:BCIN_11g05560"/>
<dbReference type="VEuPathDB" id="FungiDB:Bcin11g05560"/>
<dbReference type="OrthoDB" id="17530at2759"/>
<dbReference type="Proteomes" id="UP000001798">
    <property type="component" value="Chromosome bcin11"/>
</dbReference>
<dbReference type="GO" id="GO:0005759">
    <property type="term" value="C:mitochondrial matrix"/>
    <property type="evidence" value="ECO:0007669"/>
    <property type="project" value="UniProtKB-SubCell"/>
</dbReference>
<dbReference type="GO" id="GO:0046872">
    <property type="term" value="F:metal ion binding"/>
    <property type="evidence" value="ECO:0007669"/>
    <property type="project" value="UniProtKB-KW"/>
</dbReference>
<dbReference type="GO" id="GO:0004222">
    <property type="term" value="F:metalloendopeptidase activity"/>
    <property type="evidence" value="ECO:0007669"/>
    <property type="project" value="UniProtKB-EC"/>
</dbReference>
<dbReference type="GO" id="GO:0006518">
    <property type="term" value="P:peptide metabolic process"/>
    <property type="evidence" value="ECO:0007669"/>
    <property type="project" value="TreeGrafter"/>
</dbReference>
<dbReference type="GO" id="GO:0006627">
    <property type="term" value="P:protein processing involved in protein targeting to mitochondrion"/>
    <property type="evidence" value="ECO:0007669"/>
    <property type="project" value="TreeGrafter"/>
</dbReference>
<dbReference type="CDD" id="cd06457">
    <property type="entry name" value="M3A_MIP"/>
    <property type="match status" value="1"/>
</dbReference>
<dbReference type="Gene3D" id="3.40.390.10">
    <property type="entry name" value="Collagenase (Catalytic Domain)"/>
    <property type="match status" value="1"/>
</dbReference>
<dbReference type="Gene3D" id="1.10.1370.10">
    <property type="entry name" value="Neurolysin, domain 3"/>
    <property type="match status" value="1"/>
</dbReference>
<dbReference type="InterPro" id="IPR033851">
    <property type="entry name" value="M3A_MIP"/>
</dbReference>
<dbReference type="InterPro" id="IPR024079">
    <property type="entry name" value="MetalloPept_cat_dom_sf"/>
</dbReference>
<dbReference type="InterPro" id="IPR024077">
    <property type="entry name" value="Neurolysin/TOP_dom2"/>
</dbReference>
<dbReference type="InterPro" id="IPR045090">
    <property type="entry name" value="Pept_M3A_M3B"/>
</dbReference>
<dbReference type="InterPro" id="IPR001567">
    <property type="entry name" value="Pept_M3A_M3B_dom"/>
</dbReference>
<dbReference type="PANTHER" id="PTHR11804:SF79">
    <property type="entry name" value="MITOCHONDRIAL INTERMEDIATE PEPTIDASE"/>
    <property type="match status" value="1"/>
</dbReference>
<dbReference type="PANTHER" id="PTHR11804">
    <property type="entry name" value="PROTEASE M3 THIMET OLIGOPEPTIDASE-RELATED"/>
    <property type="match status" value="1"/>
</dbReference>
<dbReference type="Pfam" id="PF01432">
    <property type="entry name" value="Peptidase_M3"/>
    <property type="match status" value="1"/>
</dbReference>
<dbReference type="SUPFAM" id="SSF55486">
    <property type="entry name" value="Metalloproteases ('zincins'), catalytic domain"/>
    <property type="match status" value="1"/>
</dbReference>
<dbReference type="PROSITE" id="PS00142">
    <property type="entry name" value="ZINC_PROTEASE"/>
    <property type="match status" value="1"/>
</dbReference>
<reference key="1">
    <citation type="journal article" date="2011" name="PLoS Genet.">
        <title>Genomic analysis of the necrotrophic fungal pathogens Sclerotinia sclerotiorum and Botrytis cinerea.</title>
        <authorList>
            <person name="Amselem J."/>
            <person name="Cuomo C.A."/>
            <person name="van Kan J.A.L."/>
            <person name="Viaud M."/>
            <person name="Benito E.P."/>
            <person name="Couloux A."/>
            <person name="Coutinho P.M."/>
            <person name="de Vries R.P."/>
            <person name="Dyer P.S."/>
            <person name="Fillinger S."/>
            <person name="Fournier E."/>
            <person name="Gout L."/>
            <person name="Hahn M."/>
            <person name="Kohn L."/>
            <person name="Lapalu N."/>
            <person name="Plummer K.M."/>
            <person name="Pradier J.-M."/>
            <person name="Quevillon E."/>
            <person name="Sharon A."/>
            <person name="Simon A."/>
            <person name="ten Have A."/>
            <person name="Tudzynski B."/>
            <person name="Tudzynski P."/>
            <person name="Wincker P."/>
            <person name="Andrew M."/>
            <person name="Anthouard V."/>
            <person name="Beever R.E."/>
            <person name="Beffa R."/>
            <person name="Benoit I."/>
            <person name="Bouzid O."/>
            <person name="Brault B."/>
            <person name="Chen Z."/>
            <person name="Choquer M."/>
            <person name="Collemare J."/>
            <person name="Cotton P."/>
            <person name="Danchin E.G."/>
            <person name="Da Silva C."/>
            <person name="Gautier A."/>
            <person name="Giraud C."/>
            <person name="Giraud T."/>
            <person name="Gonzalez C."/>
            <person name="Grossetete S."/>
            <person name="Gueldener U."/>
            <person name="Henrissat B."/>
            <person name="Howlett B.J."/>
            <person name="Kodira C."/>
            <person name="Kretschmer M."/>
            <person name="Lappartient A."/>
            <person name="Leroch M."/>
            <person name="Levis C."/>
            <person name="Mauceli E."/>
            <person name="Neuveglise C."/>
            <person name="Oeser B."/>
            <person name="Pearson M."/>
            <person name="Poulain J."/>
            <person name="Poussereau N."/>
            <person name="Quesneville H."/>
            <person name="Rascle C."/>
            <person name="Schumacher J."/>
            <person name="Segurens B."/>
            <person name="Sexton A."/>
            <person name="Silva E."/>
            <person name="Sirven C."/>
            <person name="Soanes D.M."/>
            <person name="Talbot N.J."/>
            <person name="Templeton M."/>
            <person name="Yandava C."/>
            <person name="Yarden O."/>
            <person name="Zeng Q."/>
            <person name="Rollins J.A."/>
            <person name="Lebrun M.-H."/>
            <person name="Dickman M."/>
        </authorList>
    </citation>
    <scope>NUCLEOTIDE SEQUENCE [LARGE SCALE GENOMIC DNA]</scope>
    <source>
        <strain>B05.10</strain>
    </source>
</reference>
<reference key="2">
    <citation type="journal article" date="2012" name="Eukaryot. Cell">
        <title>Genome update of Botrytis cinerea strains B05.10 and T4.</title>
        <authorList>
            <person name="Staats M."/>
            <person name="van Kan J.A.L."/>
        </authorList>
    </citation>
    <scope>NUCLEOTIDE SEQUENCE [LARGE SCALE GENOMIC DNA]</scope>
    <scope>GENOME REANNOTATION</scope>
    <source>
        <strain>B05.10</strain>
    </source>
</reference>
<reference key="3">
    <citation type="journal article" date="2017" name="Mol. Plant Pathol.">
        <title>A gapless genome sequence of the fungus Botrytis cinerea.</title>
        <authorList>
            <person name="van Kan J.A.L."/>
            <person name="Stassen J.H.M."/>
            <person name="Mosbach A."/>
            <person name="van der Lee T.A.J."/>
            <person name="Faino L."/>
            <person name="Farmer A.D."/>
            <person name="Papasotiriou D.G."/>
            <person name="Zhou S."/>
            <person name="Seidl M.F."/>
            <person name="Cottam E."/>
            <person name="Edel D."/>
            <person name="Hahn M."/>
            <person name="Schwartz D.C."/>
            <person name="Dietrich R.A."/>
            <person name="Widdison S."/>
            <person name="Scalliet G."/>
        </authorList>
    </citation>
    <scope>NUCLEOTIDE SEQUENCE [LARGE SCALE GENOMIC DNA]</scope>
    <scope>GENOME REANNOTATION</scope>
    <source>
        <strain>B05.10</strain>
    </source>
</reference>
<comment type="function">
    <text evidence="1">Cleaves proteins, imported into the mitochondrion, to their mature size. While most mitochondrial precursor proteins are processed to the mature form in one step by mitochondrial processing peptidase (MPP), the sequential cleavage by MIP of an octapeptide after initial processing by MPP is a required step for a subgroup of nuclear-encoded precursor proteins destined for the matrix or the inner membrane (By similarity).</text>
</comment>
<comment type="catalytic activity">
    <reaction>
        <text>Release of an N-terminal octapeptide as second stage of processing of some proteins imported into the mitochondrion.</text>
        <dbReference type="EC" id="3.4.24.59"/>
    </reaction>
</comment>
<comment type="cofactor">
    <cofactor evidence="1">
        <name>Zn(2+)</name>
        <dbReference type="ChEBI" id="CHEBI:29105"/>
    </cofactor>
    <text evidence="1">Binds 1 zinc ion.</text>
</comment>
<comment type="subcellular location">
    <subcellularLocation>
        <location evidence="1">Mitochondrion matrix</location>
    </subcellularLocation>
</comment>
<comment type="similarity">
    <text evidence="5">Belongs to the peptidase M3 family.</text>
</comment>
<proteinExistence type="inferred from homology"/>